<organismHost>
    <name type="scientific">Elephas maximus</name>
    <name type="common">Indian elephant</name>
    <dbReference type="NCBI Taxonomy" id="9783"/>
</organismHost>
<organismHost>
    <name type="scientific">Loxodonta africana</name>
    <name type="common">African elephant</name>
    <dbReference type="NCBI Taxonomy" id="9785"/>
</organismHost>
<organismHost>
    <name type="scientific">Loxodonta cyclotis</name>
    <name type="common">African forest elephant</name>
    <dbReference type="NCBI Taxonomy" id="99490"/>
</organismHost>
<organism>
    <name type="scientific">Elephantid herpesvirus 1 (isolate Asian elephant/Berlin/Kiba/1998)</name>
    <name type="common">EIHV-1</name>
    <name type="synonym">Elephant endotheliotropic herpesvirus</name>
    <dbReference type="NCBI Taxonomy" id="654902"/>
    <lineage>
        <taxon>Viruses</taxon>
        <taxon>Duplodnaviria</taxon>
        <taxon>Heunggongvirae</taxon>
        <taxon>Peploviricota</taxon>
        <taxon>Herviviricetes</taxon>
        <taxon>Herpesvirales</taxon>
        <taxon>Orthoherpesviridae</taxon>
        <taxon>Betaherpesvirinae</taxon>
        <taxon>Proboscivirus</taxon>
        <taxon>Proboscivirus elephantidbeta1</taxon>
        <taxon>Elephantid herpesvirus 1</taxon>
    </lineage>
</organism>
<protein>
    <recommendedName>
        <fullName evidence="1">Envelope glycoprotein N</fullName>
    </recommendedName>
</protein>
<evidence type="ECO:0000255" key="1">
    <source>
        <dbReference type="HAMAP-Rule" id="MF_04037"/>
    </source>
</evidence>
<comment type="function">
    <text evidence="1">Envelope glycoprotein necessary for proper maturation of gM and modulation of its membrane fusion activity. Also plays a critical role in virion morphogenesis.</text>
</comment>
<comment type="subunit">
    <text evidence="1">Interacts (via N-terminus) with gM (via N-terminus). The gM-gN heterodimer forms the gCII complex.</text>
</comment>
<comment type="subcellular location">
    <subcellularLocation>
        <location evidence="1">Virion membrane</location>
        <topology evidence="1">Single-pass type I membrane protein</topology>
    </subcellularLocation>
    <subcellularLocation>
        <location evidence="1">Host membrane</location>
        <topology evidence="1">Single-pass type I membrane protein</topology>
    </subcellularLocation>
    <subcellularLocation>
        <location evidence="1">Host Golgi apparatus</location>
        <location evidence="1">Host trans-Golgi network</location>
    </subcellularLocation>
    <text evidence="1">When coexpressed with gM, localizes in the host trans-Golgi network.</text>
</comment>
<comment type="similarity">
    <text evidence="1">Belongs to the herpesviridae glycoprotein N family.</text>
</comment>
<accession>Q18LF1</accession>
<keyword id="KW-1015">Disulfide bond</keyword>
<keyword id="KW-1040">Host Golgi apparatus</keyword>
<keyword id="KW-1043">Host membrane</keyword>
<keyword id="KW-0472">Membrane</keyword>
<keyword id="KW-0812">Transmembrane</keyword>
<keyword id="KW-1133">Transmembrane helix</keyword>
<keyword id="KW-0261">Viral envelope protein</keyword>
<keyword id="KW-0946">Virion</keyword>
<gene>
    <name evidence="1" type="primary">gN</name>
</gene>
<dbReference type="EMBL" id="AF322977">
    <property type="protein sequence ID" value="ABG36568.1"/>
    <property type="molecule type" value="Genomic_DNA"/>
</dbReference>
<dbReference type="GO" id="GO:0044177">
    <property type="term" value="C:host cell Golgi apparatus"/>
    <property type="evidence" value="ECO:0007669"/>
    <property type="project" value="UniProtKB-SubCell"/>
</dbReference>
<dbReference type="GO" id="GO:0033644">
    <property type="term" value="C:host cell membrane"/>
    <property type="evidence" value="ECO:0007669"/>
    <property type="project" value="UniProtKB-SubCell"/>
</dbReference>
<dbReference type="GO" id="GO:0016020">
    <property type="term" value="C:membrane"/>
    <property type="evidence" value="ECO:0007669"/>
    <property type="project" value="UniProtKB-KW"/>
</dbReference>
<dbReference type="GO" id="GO:0019031">
    <property type="term" value="C:viral envelope"/>
    <property type="evidence" value="ECO:0007669"/>
    <property type="project" value="UniProtKB-KW"/>
</dbReference>
<dbReference type="GO" id="GO:0055036">
    <property type="term" value="C:virion membrane"/>
    <property type="evidence" value="ECO:0007669"/>
    <property type="project" value="UniProtKB-SubCell"/>
</dbReference>
<dbReference type="HAMAP" id="MF_04037">
    <property type="entry name" value="HSV_GN"/>
    <property type="match status" value="1"/>
</dbReference>
<dbReference type="InterPro" id="IPR005211">
    <property type="entry name" value="Herpes_glycoprotein_N_domain"/>
</dbReference>
<dbReference type="InterPro" id="IPR034707">
    <property type="entry name" value="HSV_GN"/>
</dbReference>
<dbReference type="Pfam" id="PF03554">
    <property type="entry name" value="Herpes_UL73"/>
    <property type="match status" value="1"/>
</dbReference>
<proteinExistence type="inferred from homology"/>
<reference key="1">
    <citation type="journal article" date="2007" name="J. Virol.">
        <title>Identification of novel rodent herpesviruses, including the first gammaherpesvirus of Mus musculus.</title>
        <authorList>
            <person name="Ehlers B."/>
            <person name="Kuchler J."/>
            <person name="Yasmum N."/>
            <person name="Dural G."/>
            <person name="Voigt S."/>
            <person name="Schmidt-Chanasit J."/>
            <person name="Jakel T."/>
            <person name="Matuschka F.R."/>
            <person name="Richter D."/>
            <person name="Essbauer S."/>
            <person name="Hughes D.J."/>
            <person name="Summers C."/>
            <person name="Bennett M."/>
            <person name="Stewart J.P."/>
            <person name="Ulrich R.G."/>
        </authorList>
    </citation>
    <scope>NUCLEOTIDE SEQUENCE [GENOMIC DNA]</scope>
</reference>
<reference key="2">
    <citation type="journal article" date="2001" name="J. Gen. Virol.">
        <title>Genetic and ultrastructural characterization of a European isolate of the fatal endotheliotropic elephant herpesvirus.</title>
        <authorList>
            <person name="Ehlers B."/>
            <person name="Burkhardt S."/>
            <person name="Goltz M."/>
            <person name="Bergmann V."/>
            <person name="Ochs A."/>
            <person name="Weiler H."/>
            <person name="Hentschke J."/>
        </authorList>
    </citation>
    <scope>NUCLEOTIDE SEQUENCE [GENOMIC DNA]</scope>
</reference>
<sequence>MARINSNSGTAVLSRGAAVPAARRPASGTSASKISKLSSTGPPNAPWSKSLTIFKTFISVYLGQAACLAASSRISSRCIVCIRSTLFLTLFALNVAQEFVFGATPAPTVKTDLNIRDFSKSSCSALKYRIYVSSFVSVLNIILYVLLFLASVVYIRYLCHQSITTETVKDY</sequence>
<feature type="chain" id="PRO_0000408155" description="Envelope glycoprotein N">
    <location>
        <begin position="1"/>
        <end position="171"/>
    </location>
</feature>
<feature type="topological domain" description="Virion surface" evidence="1">
    <location>
        <begin position="1"/>
        <end position="132"/>
    </location>
</feature>
<feature type="transmembrane region" description="Helical" evidence="1">
    <location>
        <begin position="133"/>
        <end position="153"/>
    </location>
</feature>
<feature type="topological domain" description="Intravirion" evidence="1">
    <location>
        <begin position="154"/>
        <end position="171"/>
    </location>
</feature>
<feature type="disulfide bond" description="Interchain (with gM)" evidence="1">
    <location>
        <position position="123"/>
    </location>
</feature>
<name>GN_ELHVK</name>